<evidence type="ECO:0000250" key="1">
    <source>
        <dbReference type="UniProtKB" id="D4AEP3"/>
    </source>
</evidence>
<evidence type="ECO:0000255" key="2"/>
<evidence type="ECO:0000305" key="3"/>
<name>F168B_XENTR</name>
<accession>Q0VFP2</accession>
<reference key="1">
    <citation type="submission" date="2006-07" db="EMBL/GenBank/DDBJ databases">
        <authorList>
            <consortium name="NIH - Xenopus Gene Collection (XGC) project"/>
        </authorList>
    </citation>
    <scope>NUCLEOTIDE SEQUENCE [LARGE SCALE MRNA]</scope>
    <source>
        <tissue>Testis</tissue>
    </source>
</reference>
<proteinExistence type="evidence at transcript level"/>
<keyword id="KW-1003">Cell membrane</keyword>
<keyword id="KW-0966">Cell projection</keyword>
<keyword id="KW-0963">Cytoplasm</keyword>
<keyword id="KW-0472">Membrane</keyword>
<keyword id="KW-1185">Reference proteome</keyword>
<keyword id="KW-0812">Transmembrane</keyword>
<keyword id="KW-1133">Transmembrane helix</keyword>
<sequence length="195" mass="20531">MNPVYSPGSSGVPYANAKGIGYPAGFPMGYAAAAPAYSPNMYAGPNPAFQPGYTPGTPYKVSCSPTSGTVPPYSSSPNPYQTAVYPVRSAYPQQNPYAQQGAYYTQPLYAAPPHVIHHTTVVQPNGMPATMYPAPIPQPRGNGVAMGMVAGTTMAMSAGTLLTSHYPTPVAPHQVTMPTYRPPGTPTYSYVPPQW</sequence>
<protein>
    <recommendedName>
        <fullName>Myelin-associated neurite-outgrowth inhibitor</fullName>
        <shortName>Mani</shortName>
    </recommendedName>
</protein>
<comment type="function">
    <text evidence="1">Inhibitor of neuronal axonal outgrowth.</text>
</comment>
<comment type="subcellular location">
    <subcellularLocation>
        <location evidence="1">Cytoplasm</location>
        <location evidence="1">Perinuclear region</location>
    </subcellularLocation>
    <subcellularLocation>
        <location evidence="1">Cell membrane</location>
        <topology evidence="1">Multi-pass membrane protein</topology>
    </subcellularLocation>
    <subcellularLocation>
        <location evidence="1">Cell projection</location>
        <location evidence="1">Axon</location>
    </subcellularLocation>
</comment>
<comment type="similarity">
    <text evidence="3">Belongs to the FAM168 family.</text>
</comment>
<gene>
    <name type="primary">fam168b</name>
</gene>
<dbReference type="EMBL" id="BC118754">
    <property type="protein sequence ID" value="AAI18755.1"/>
    <property type="molecule type" value="mRNA"/>
</dbReference>
<dbReference type="RefSeq" id="NP_001072202.1">
    <property type="nucleotide sequence ID" value="NM_001078734.1"/>
</dbReference>
<dbReference type="FunCoup" id="Q0VFP2">
    <property type="interactions" value="496"/>
</dbReference>
<dbReference type="DNASU" id="779648"/>
<dbReference type="GeneID" id="779648"/>
<dbReference type="KEGG" id="xtr:779648"/>
<dbReference type="AGR" id="Xenbase:XB-GENE-5865193"/>
<dbReference type="CTD" id="130074"/>
<dbReference type="Xenbase" id="XB-GENE-5865193">
    <property type="gene designation" value="fam168b"/>
</dbReference>
<dbReference type="HOGENOM" id="CLU_065824_1_0_1"/>
<dbReference type="InParanoid" id="Q0VFP2"/>
<dbReference type="OrthoDB" id="9893817at2759"/>
<dbReference type="Proteomes" id="UP000008143">
    <property type="component" value="Chromosome 5"/>
</dbReference>
<dbReference type="Bgee" id="ENSXETG00000013867">
    <property type="expression patterns" value="Expressed in blastula and 13 other cell types or tissues"/>
</dbReference>
<dbReference type="GO" id="GO:0030424">
    <property type="term" value="C:axon"/>
    <property type="evidence" value="ECO:0007669"/>
    <property type="project" value="UniProtKB-SubCell"/>
</dbReference>
<dbReference type="GO" id="GO:0048471">
    <property type="term" value="C:perinuclear region of cytoplasm"/>
    <property type="evidence" value="ECO:0007669"/>
    <property type="project" value="UniProtKB-SubCell"/>
</dbReference>
<dbReference type="GO" id="GO:0005886">
    <property type="term" value="C:plasma membrane"/>
    <property type="evidence" value="ECO:0007669"/>
    <property type="project" value="UniProtKB-SubCell"/>
</dbReference>
<dbReference type="InterPro" id="IPR029247">
    <property type="entry name" value="FAM168A/MANI"/>
</dbReference>
<dbReference type="PANTHER" id="PTHR31844">
    <property type="entry name" value="MYELIN-ASSOCIATED NEURITE-OUTGROWTH INHIBITOR-RELATED"/>
    <property type="match status" value="1"/>
</dbReference>
<dbReference type="Pfam" id="PF14944">
    <property type="entry name" value="TCRP1"/>
    <property type="match status" value="2"/>
</dbReference>
<feature type="chain" id="PRO_0000325982" description="Myelin-associated neurite-outgrowth inhibitor">
    <location>
        <begin position="1"/>
        <end position="195"/>
    </location>
</feature>
<feature type="topological domain" description="Cytoplasmic" evidence="2">
    <location>
        <begin position="1"/>
        <end position="18"/>
    </location>
</feature>
<feature type="transmembrane region" description="Helical" evidence="2">
    <location>
        <begin position="19"/>
        <end position="43"/>
    </location>
</feature>
<feature type="topological domain" description="Extracellular" evidence="2">
    <location>
        <begin position="44"/>
        <end position="143"/>
    </location>
</feature>
<feature type="transmembrane region" description="Helical" evidence="2">
    <location>
        <begin position="144"/>
        <end position="162"/>
    </location>
</feature>
<feature type="topological domain" description="Cytoplasmic" evidence="2">
    <location>
        <begin position="163"/>
        <end position="195"/>
    </location>
</feature>
<organism>
    <name type="scientific">Xenopus tropicalis</name>
    <name type="common">Western clawed frog</name>
    <name type="synonym">Silurana tropicalis</name>
    <dbReference type="NCBI Taxonomy" id="8364"/>
    <lineage>
        <taxon>Eukaryota</taxon>
        <taxon>Metazoa</taxon>
        <taxon>Chordata</taxon>
        <taxon>Craniata</taxon>
        <taxon>Vertebrata</taxon>
        <taxon>Euteleostomi</taxon>
        <taxon>Amphibia</taxon>
        <taxon>Batrachia</taxon>
        <taxon>Anura</taxon>
        <taxon>Pipoidea</taxon>
        <taxon>Pipidae</taxon>
        <taxon>Xenopodinae</taxon>
        <taxon>Xenopus</taxon>
        <taxon>Silurana</taxon>
    </lineage>
</organism>